<name>IF13_CUPNH</name>
<accession>Q0JZW8</accession>
<dbReference type="EMBL" id="AM260480">
    <property type="protein sequence ID" value="CAJ96706.1"/>
    <property type="molecule type" value="Genomic_DNA"/>
</dbReference>
<dbReference type="SMR" id="Q0JZW8"/>
<dbReference type="STRING" id="381666.H16_B1924"/>
<dbReference type="KEGG" id="reh:H16_B1924"/>
<dbReference type="eggNOG" id="COG0361">
    <property type="taxonomic scope" value="Bacteria"/>
</dbReference>
<dbReference type="HOGENOM" id="CLU_151267_4_1_4"/>
<dbReference type="OrthoDB" id="9803250at2"/>
<dbReference type="Proteomes" id="UP000008210">
    <property type="component" value="Chromosome 2"/>
</dbReference>
<dbReference type="GO" id="GO:0005829">
    <property type="term" value="C:cytosol"/>
    <property type="evidence" value="ECO:0007669"/>
    <property type="project" value="TreeGrafter"/>
</dbReference>
<dbReference type="GO" id="GO:0043022">
    <property type="term" value="F:ribosome binding"/>
    <property type="evidence" value="ECO:0007669"/>
    <property type="project" value="UniProtKB-UniRule"/>
</dbReference>
<dbReference type="GO" id="GO:0019843">
    <property type="term" value="F:rRNA binding"/>
    <property type="evidence" value="ECO:0007669"/>
    <property type="project" value="UniProtKB-UniRule"/>
</dbReference>
<dbReference type="GO" id="GO:0003743">
    <property type="term" value="F:translation initiation factor activity"/>
    <property type="evidence" value="ECO:0007669"/>
    <property type="project" value="UniProtKB-UniRule"/>
</dbReference>
<dbReference type="CDD" id="cd04451">
    <property type="entry name" value="S1_IF1"/>
    <property type="match status" value="1"/>
</dbReference>
<dbReference type="FunFam" id="2.40.50.140:FF:000002">
    <property type="entry name" value="Translation initiation factor IF-1"/>
    <property type="match status" value="1"/>
</dbReference>
<dbReference type="Gene3D" id="2.40.50.140">
    <property type="entry name" value="Nucleic acid-binding proteins"/>
    <property type="match status" value="1"/>
</dbReference>
<dbReference type="HAMAP" id="MF_00075">
    <property type="entry name" value="IF_1"/>
    <property type="match status" value="1"/>
</dbReference>
<dbReference type="InterPro" id="IPR012340">
    <property type="entry name" value="NA-bd_OB-fold"/>
</dbReference>
<dbReference type="InterPro" id="IPR006196">
    <property type="entry name" value="RNA-binding_domain_S1_IF1"/>
</dbReference>
<dbReference type="InterPro" id="IPR004368">
    <property type="entry name" value="TIF_IF1"/>
</dbReference>
<dbReference type="NCBIfam" id="TIGR00008">
    <property type="entry name" value="infA"/>
    <property type="match status" value="1"/>
</dbReference>
<dbReference type="PANTHER" id="PTHR33370">
    <property type="entry name" value="TRANSLATION INITIATION FACTOR IF-1, CHLOROPLASTIC"/>
    <property type="match status" value="1"/>
</dbReference>
<dbReference type="PANTHER" id="PTHR33370:SF1">
    <property type="entry name" value="TRANSLATION INITIATION FACTOR IF-1, CHLOROPLASTIC"/>
    <property type="match status" value="1"/>
</dbReference>
<dbReference type="Pfam" id="PF01176">
    <property type="entry name" value="eIF-1a"/>
    <property type="match status" value="1"/>
</dbReference>
<dbReference type="SUPFAM" id="SSF50249">
    <property type="entry name" value="Nucleic acid-binding proteins"/>
    <property type="match status" value="1"/>
</dbReference>
<dbReference type="PROSITE" id="PS50832">
    <property type="entry name" value="S1_IF1_TYPE"/>
    <property type="match status" value="1"/>
</dbReference>
<keyword id="KW-0963">Cytoplasm</keyword>
<keyword id="KW-0396">Initiation factor</keyword>
<keyword id="KW-0648">Protein biosynthesis</keyword>
<keyword id="KW-1185">Reference proteome</keyword>
<keyword id="KW-0694">RNA-binding</keyword>
<keyword id="KW-0699">rRNA-binding</keyword>
<organism>
    <name type="scientific">Cupriavidus necator (strain ATCC 17699 / DSM 428 / KCTC 22496 / NCIMB 10442 / H16 / Stanier 337)</name>
    <name type="common">Ralstonia eutropha</name>
    <dbReference type="NCBI Taxonomy" id="381666"/>
    <lineage>
        <taxon>Bacteria</taxon>
        <taxon>Pseudomonadati</taxon>
        <taxon>Pseudomonadota</taxon>
        <taxon>Betaproteobacteria</taxon>
        <taxon>Burkholderiales</taxon>
        <taxon>Burkholderiaceae</taxon>
        <taxon>Cupriavidus</taxon>
    </lineage>
</organism>
<proteinExistence type="inferred from homology"/>
<gene>
    <name evidence="1" type="primary">infA3</name>
    <name type="synonym">infA2</name>
    <name type="ordered locus">H16_B1924</name>
</gene>
<protein>
    <recommendedName>
        <fullName evidence="1">Translation initiation factor IF-1 3</fullName>
    </recommendedName>
</protein>
<reference key="1">
    <citation type="journal article" date="2006" name="Nat. Biotechnol.">
        <title>Genome sequence of the bioplastic-producing 'Knallgas' bacterium Ralstonia eutropha H16.</title>
        <authorList>
            <person name="Pohlmann A."/>
            <person name="Fricke W.F."/>
            <person name="Reinecke F."/>
            <person name="Kusian B."/>
            <person name="Liesegang H."/>
            <person name="Cramm R."/>
            <person name="Eitinger T."/>
            <person name="Ewering C."/>
            <person name="Poetter M."/>
            <person name="Schwartz E."/>
            <person name="Strittmatter A."/>
            <person name="Voss I."/>
            <person name="Gottschalk G."/>
            <person name="Steinbuechel A."/>
            <person name="Friedrich B."/>
            <person name="Bowien B."/>
        </authorList>
    </citation>
    <scope>NUCLEOTIDE SEQUENCE [LARGE SCALE GENOMIC DNA]</scope>
    <source>
        <strain>ATCC 17699 / DSM 428 / KCTC 22496 / NCIMB 10442 / H16 / Stanier 337</strain>
    </source>
</reference>
<sequence>MAKEELVEFGGKVSEVLPDNRFRVILENGFEVWAYSSGRLKKNRIRVLAGDRVTLEMSPYDLTKGRINYRHKS</sequence>
<feature type="chain" id="PRO_0000338898" description="Translation initiation factor IF-1 3">
    <location>
        <begin position="1"/>
        <end position="73"/>
    </location>
</feature>
<feature type="domain" description="S1-like" evidence="1">
    <location>
        <begin position="1"/>
        <end position="72"/>
    </location>
</feature>
<comment type="function">
    <text evidence="1">One of the essential components for the initiation of protein synthesis. Stabilizes the binding of IF-2 and IF-3 on the 30S subunit to which N-formylmethionyl-tRNA(fMet) subsequently binds. Helps modulate mRNA selection, yielding the 30S pre-initiation complex (PIC). Upon addition of the 50S ribosomal subunit IF-1, IF-2 and IF-3 are released leaving the mature 70S translation initiation complex.</text>
</comment>
<comment type="subunit">
    <text evidence="1">Component of the 30S ribosomal translation pre-initiation complex which assembles on the 30S ribosome in the order IF-2 and IF-3, IF-1 and N-formylmethionyl-tRNA(fMet); mRNA recruitment can occur at any time during PIC assembly.</text>
</comment>
<comment type="subcellular location">
    <subcellularLocation>
        <location evidence="1">Cytoplasm</location>
    </subcellularLocation>
</comment>
<comment type="similarity">
    <text evidence="1">Belongs to the IF-1 family.</text>
</comment>
<evidence type="ECO:0000255" key="1">
    <source>
        <dbReference type="HAMAP-Rule" id="MF_00075"/>
    </source>
</evidence>